<keyword id="KW-0028">Amino-acid biosynthesis</keyword>
<keyword id="KW-0100">Branched-chain amino acid biosynthesis</keyword>
<keyword id="KW-0460">Magnesium</keyword>
<keyword id="KW-0479">Metal-binding</keyword>
<keyword id="KW-0521">NADP</keyword>
<keyword id="KW-0560">Oxidoreductase</keyword>
<comment type="function">
    <text evidence="1">Involved in the biosynthesis of branched-chain amino acids (BCAA). Catalyzes an alkyl-migration followed by a ketol-acid reduction of (S)-2-acetolactate (S2AL) to yield (R)-2,3-dihydroxy-isovalerate. In the isomerase reaction, S2AL is rearranged via a Mg-dependent methyl migration to produce 3-hydroxy-3-methyl-2-ketobutyrate (HMKB). In the reductase reaction, this 2-ketoacid undergoes a metal-dependent reduction by NADPH to yield (R)-2,3-dihydroxy-isovalerate.</text>
</comment>
<comment type="catalytic activity">
    <reaction evidence="1">
        <text>(2R)-2,3-dihydroxy-3-methylbutanoate + NADP(+) = (2S)-2-acetolactate + NADPH + H(+)</text>
        <dbReference type="Rhea" id="RHEA:22068"/>
        <dbReference type="ChEBI" id="CHEBI:15378"/>
        <dbReference type="ChEBI" id="CHEBI:49072"/>
        <dbReference type="ChEBI" id="CHEBI:57783"/>
        <dbReference type="ChEBI" id="CHEBI:58349"/>
        <dbReference type="ChEBI" id="CHEBI:58476"/>
        <dbReference type="EC" id="1.1.1.86"/>
    </reaction>
</comment>
<comment type="catalytic activity">
    <reaction evidence="1">
        <text>(2R,3R)-2,3-dihydroxy-3-methylpentanoate + NADP(+) = (S)-2-ethyl-2-hydroxy-3-oxobutanoate + NADPH + H(+)</text>
        <dbReference type="Rhea" id="RHEA:13493"/>
        <dbReference type="ChEBI" id="CHEBI:15378"/>
        <dbReference type="ChEBI" id="CHEBI:49256"/>
        <dbReference type="ChEBI" id="CHEBI:49258"/>
        <dbReference type="ChEBI" id="CHEBI:57783"/>
        <dbReference type="ChEBI" id="CHEBI:58349"/>
        <dbReference type="EC" id="1.1.1.86"/>
    </reaction>
</comment>
<comment type="cofactor">
    <cofactor evidence="1">
        <name>Mg(2+)</name>
        <dbReference type="ChEBI" id="CHEBI:18420"/>
    </cofactor>
    <text evidence="1">Binds 2 magnesium ions per subunit.</text>
</comment>
<comment type="pathway">
    <text evidence="1">Amino-acid biosynthesis; L-isoleucine biosynthesis; L-isoleucine from 2-oxobutanoate: step 2/4.</text>
</comment>
<comment type="pathway">
    <text evidence="1">Amino-acid biosynthesis; L-valine biosynthesis; L-valine from pyruvate: step 2/4.</text>
</comment>
<comment type="similarity">
    <text evidence="1">Belongs to the ketol-acid reductoisomerase family.</text>
</comment>
<sequence>MARLYYDADANLDLLSNKTVAIVGYGSQGHAHALNLRDSGVKVVVGLYPGSKSAESARLEGLTVTSVAEAAEVADLIMILLPDEVQKTVYQQEILPHLKPGKVIAFAHGFNIHFAQVVPPADVDVIMVAPKGPGHLVRRTYTQGEGVPCLFAVYQDASGQARDRAMAYAKGIGGTRAGILETTFREETETDLFGEQVVLCGGLTALIKSGFETLVAAGYQPELAYFECLHEVKLIVDLIVEGGLAKMRDSISNTAEYGDYTRGPRIITDETRREMEKILYEIQTGQFAREFVLENMSGKAGFTAMRRREAEHPIEEVGKDLRAMFSWLSKR</sequence>
<protein>
    <recommendedName>
        <fullName evidence="1">Ketol-acid reductoisomerase (NADP(+))</fullName>
        <shortName evidence="1">KARI</shortName>
        <ecNumber evidence="1">1.1.1.86</ecNumber>
    </recommendedName>
    <alternativeName>
        <fullName evidence="1">Acetohydroxy-acid isomeroreductase</fullName>
        <shortName evidence="1">AHIR</shortName>
    </alternativeName>
    <alternativeName>
        <fullName evidence="1">Alpha-keto-beta-hydroxylacyl reductoisomerase</fullName>
    </alternativeName>
    <alternativeName>
        <fullName evidence="1">Ketol-acid reductoisomerase type 1</fullName>
    </alternativeName>
    <alternativeName>
        <fullName evidence="1">Ketol-acid reductoisomerase type I</fullName>
    </alternativeName>
</protein>
<accession>B8HNI6</accession>
<reference key="1">
    <citation type="journal article" date="2011" name="MBio">
        <title>Novel metabolic attributes of the genus Cyanothece, comprising a group of unicellular nitrogen-fixing Cyanobacteria.</title>
        <authorList>
            <person name="Bandyopadhyay A."/>
            <person name="Elvitigala T."/>
            <person name="Welsh E."/>
            <person name="Stockel J."/>
            <person name="Liberton M."/>
            <person name="Min H."/>
            <person name="Sherman L.A."/>
            <person name="Pakrasi H.B."/>
        </authorList>
    </citation>
    <scope>NUCLEOTIDE SEQUENCE [LARGE SCALE GENOMIC DNA]</scope>
    <source>
        <strain>PCC 7425 / ATCC 29141</strain>
    </source>
</reference>
<dbReference type="EC" id="1.1.1.86" evidence="1"/>
<dbReference type="EMBL" id="CP001344">
    <property type="protein sequence ID" value="ACL43717.1"/>
    <property type="molecule type" value="Genomic_DNA"/>
</dbReference>
<dbReference type="SMR" id="B8HNI6"/>
<dbReference type="STRING" id="395961.Cyan7425_1343"/>
<dbReference type="KEGG" id="cyn:Cyan7425_1343"/>
<dbReference type="eggNOG" id="COG0059">
    <property type="taxonomic scope" value="Bacteria"/>
</dbReference>
<dbReference type="HOGENOM" id="CLU_033821_0_1_3"/>
<dbReference type="OrthoDB" id="9804088at2"/>
<dbReference type="UniPathway" id="UPA00047">
    <property type="reaction ID" value="UER00056"/>
</dbReference>
<dbReference type="UniPathway" id="UPA00049">
    <property type="reaction ID" value="UER00060"/>
</dbReference>
<dbReference type="GO" id="GO:0005829">
    <property type="term" value="C:cytosol"/>
    <property type="evidence" value="ECO:0007669"/>
    <property type="project" value="TreeGrafter"/>
</dbReference>
<dbReference type="GO" id="GO:0004455">
    <property type="term" value="F:ketol-acid reductoisomerase activity"/>
    <property type="evidence" value="ECO:0007669"/>
    <property type="project" value="UniProtKB-UniRule"/>
</dbReference>
<dbReference type="GO" id="GO:0000287">
    <property type="term" value="F:magnesium ion binding"/>
    <property type="evidence" value="ECO:0007669"/>
    <property type="project" value="UniProtKB-UniRule"/>
</dbReference>
<dbReference type="GO" id="GO:0050661">
    <property type="term" value="F:NADP binding"/>
    <property type="evidence" value="ECO:0007669"/>
    <property type="project" value="InterPro"/>
</dbReference>
<dbReference type="GO" id="GO:0009097">
    <property type="term" value="P:isoleucine biosynthetic process"/>
    <property type="evidence" value="ECO:0007669"/>
    <property type="project" value="UniProtKB-UniRule"/>
</dbReference>
<dbReference type="GO" id="GO:0009099">
    <property type="term" value="P:L-valine biosynthetic process"/>
    <property type="evidence" value="ECO:0007669"/>
    <property type="project" value="UniProtKB-UniRule"/>
</dbReference>
<dbReference type="FunFam" id="3.40.50.720:FF:000023">
    <property type="entry name" value="Ketol-acid reductoisomerase (NADP(+))"/>
    <property type="match status" value="1"/>
</dbReference>
<dbReference type="Gene3D" id="6.10.240.10">
    <property type="match status" value="1"/>
</dbReference>
<dbReference type="Gene3D" id="3.40.50.720">
    <property type="entry name" value="NAD(P)-binding Rossmann-like Domain"/>
    <property type="match status" value="1"/>
</dbReference>
<dbReference type="HAMAP" id="MF_00435">
    <property type="entry name" value="IlvC"/>
    <property type="match status" value="1"/>
</dbReference>
<dbReference type="InterPro" id="IPR008927">
    <property type="entry name" value="6-PGluconate_DH-like_C_sf"/>
</dbReference>
<dbReference type="InterPro" id="IPR013023">
    <property type="entry name" value="KARI"/>
</dbReference>
<dbReference type="InterPro" id="IPR000506">
    <property type="entry name" value="KARI_C"/>
</dbReference>
<dbReference type="InterPro" id="IPR013116">
    <property type="entry name" value="KARI_N"/>
</dbReference>
<dbReference type="InterPro" id="IPR014359">
    <property type="entry name" value="KARI_prok"/>
</dbReference>
<dbReference type="InterPro" id="IPR036291">
    <property type="entry name" value="NAD(P)-bd_dom_sf"/>
</dbReference>
<dbReference type="NCBIfam" id="TIGR00465">
    <property type="entry name" value="ilvC"/>
    <property type="match status" value="1"/>
</dbReference>
<dbReference type="NCBIfam" id="NF004017">
    <property type="entry name" value="PRK05479.1"/>
    <property type="match status" value="1"/>
</dbReference>
<dbReference type="NCBIfam" id="NF009940">
    <property type="entry name" value="PRK13403.1"/>
    <property type="match status" value="1"/>
</dbReference>
<dbReference type="PANTHER" id="PTHR21371">
    <property type="entry name" value="KETOL-ACID REDUCTOISOMERASE, MITOCHONDRIAL"/>
    <property type="match status" value="1"/>
</dbReference>
<dbReference type="PANTHER" id="PTHR21371:SF1">
    <property type="entry name" value="KETOL-ACID REDUCTOISOMERASE, MITOCHONDRIAL"/>
    <property type="match status" value="1"/>
</dbReference>
<dbReference type="Pfam" id="PF01450">
    <property type="entry name" value="KARI_C"/>
    <property type="match status" value="1"/>
</dbReference>
<dbReference type="Pfam" id="PF07991">
    <property type="entry name" value="KARI_N"/>
    <property type="match status" value="1"/>
</dbReference>
<dbReference type="PIRSF" id="PIRSF000116">
    <property type="entry name" value="IlvC_gammaproteo"/>
    <property type="match status" value="1"/>
</dbReference>
<dbReference type="SUPFAM" id="SSF48179">
    <property type="entry name" value="6-phosphogluconate dehydrogenase C-terminal domain-like"/>
    <property type="match status" value="1"/>
</dbReference>
<dbReference type="SUPFAM" id="SSF51735">
    <property type="entry name" value="NAD(P)-binding Rossmann-fold domains"/>
    <property type="match status" value="1"/>
</dbReference>
<dbReference type="PROSITE" id="PS51851">
    <property type="entry name" value="KARI_C"/>
    <property type="match status" value="1"/>
</dbReference>
<dbReference type="PROSITE" id="PS51850">
    <property type="entry name" value="KARI_N"/>
    <property type="match status" value="1"/>
</dbReference>
<feature type="chain" id="PRO_1000190942" description="Ketol-acid reductoisomerase (NADP(+))">
    <location>
        <begin position="1"/>
        <end position="331"/>
    </location>
</feature>
<feature type="domain" description="KARI N-terminal Rossmann" evidence="2">
    <location>
        <begin position="2"/>
        <end position="182"/>
    </location>
</feature>
<feature type="domain" description="KARI C-terminal knotted" evidence="3">
    <location>
        <begin position="183"/>
        <end position="328"/>
    </location>
</feature>
<feature type="active site" evidence="1">
    <location>
        <position position="108"/>
    </location>
</feature>
<feature type="binding site" evidence="1">
    <location>
        <begin position="25"/>
        <end position="28"/>
    </location>
    <ligand>
        <name>NADP(+)</name>
        <dbReference type="ChEBI" id="CHEBI:58349"/>
    </ligand>
</feature>
<feature type="binding site" evidence="1">
    <location>
        <position position="51"/>
    </location>
    <ligand>
        <name>NADP(+)</name>
        <dbReference type="ChEBI" id="CHEBI:58349"/>
    </ligand>
</feature>
<feature type="binding site" evidence="1">
    <location>
        <position position="53"/>
    </location>
    <ligand>
        <name>NADP(+)</name>
        <dbReference type="ChEBI" id="CHEBI:58349"/>
    </ligand>
</feature>
<feature type="binding site" evidence="1">
    <location>
        <begin position="83"/>
        <end position="86"/>
    </location>
    <ligand>
        <name>NADP(+)</name>
        <dbReference type="ChEBI" id="CHEBI:58349"/>
    </ligand>
</feature>
<feature type="binding site" evidence="1">
    <location>
        <position position="134"/>
    </location>
    <ligand>
        <name>NADP(+)</name>
        <dbReference type="ChEBI" id="CHEBI:58349"/>
    </ligand>
</feature>
<feature type="binding site" evidence="1">
    <location>
        <position position="191"/>
    </location>
    <ligand>
        <name>Mg(2+)</name>
        <dbReference type="ChEBI" id="CHEBI:18420"/>
        <label>1</label>
    </ligand>
</feature>
<feature type="binding site" evidence="1">
    <location>
        <position position="191"/>
    </location>
    <ligand>
        <name>Mg(2+)</name>
        <dbReference type="ChEBI" id="CHEBI:18420"/>
        <label>2</label>
    </ligand>
</feature>
<feature type="binding site" evidence="1">
    <location>
        <position position="195"/>
    </location>
    <ligand>
        <name>Mg(2+)</name>
        <dbReference type="ChEBI" id="CHEBI:18420"/>
        <label>1</label>
    </ligand>
</feature>
<feature type="binding site" evidence="1">
    <location>
        <position position="227"/>
    </location>
    <ligand>
        <name>Mg(2+)</name>
        <dbReference type="ChEBI" id="CHEBI:18420"/>
        <label>2</label>
    </ligand>
</feature>
<feature type="binding site" evidence="1">
    <location>
        <position position="231"/>
    </location>
    <ligand>
        <name>Mg(2+)</name>
        <dbReference type="ChEBI" id="CHEBI:18420"/>
        <label>2</label>
    </ligand>
</feature>
<feature type="binding site" evidence="1">
    <location>
        <position position="252"/>
    </location>
    <ligand>
        <name>substrate</name>
    </ligand>
</feature>
<gene>
    <name evidence="1" type="primary">ilvC</name>
    <name type="ordered locus">Cyan7425_1343</name>
</gene>
<name>ILVC_CYAP4</name>
<evidence type="ECO:0000255" key="1">
    <source>
        <dbReference type="HAMAP-Rule" id="MF_00435"/>
    </source>
</evidence>
<evidence type="ECO:0000255" key="2">
    <source>
        <dbReference type="PROSITE-ProRule" id="PRU01197"/>
    </source>
</evidence>
<evidence type="ECO:0000255" key="3">
    <source>
        <dbReference type="PROSITE-ProRule" id="PRU01198"/>
    </source>
</evidence>
<organism>
    <name type="scientific">Cyanothece sp. (strain PCC 7425 / ATCC 29141)</name>
    <dbReference type="NCBI Taxonomy" id="395961"/>
    <lineage>
        <taxon>Bacteria</taxon>
        <taxon>Bacillati</taxon>
        <taxon>Cyanobacteriota</taxon>
        <taxon>Cyanophyceae</taxon>
        <taxon>Gomontiellales</taxon>
        <taxon>Cyanothecaceae</taxon>
        <taxon>Cyanothece</taxon>
    </lineage>
</organism>
<proteinExistence type="inferred from homology"/>